<comment type="function">
    <text evidence="2">Regulates the dendritic spine distribution of CTTN/cortactin in hippocampal neurons, and thus controls dendritic spinogenesis and dendritic spine maintenance. Associates with the striatin-interacting phosphatase and kinase (STRIPAK) core complex to regulate dendritic spine distribution of the STRIPAK complex in hippocampal neurons.</text>
</comment>
<comment type="subunit">
    <text evidence="2">Interacts with CTTN/cortactin SH3 domain. Interacts with STRN, STRN4/zinedin and MOB4/phocein; this interactions mediate the association with the STRIPAK core complex and may regulate dendritic spine distribution of the STRIPAK complex in hippocampal neurons. Activation of glutamate receptors weakens the interaction with STRN and STRN4.</text>
</comment>
<comment type="subcellular location">
    <subcellularLocation>
        <location evidence="1">Cytoplasm</location>
        <location evidence="1">Cell cortex</location>
    </subcellularLocation>
    <subcellularLocation>
        <location evidence="2">Cell projection</location>
        <location evidence="2">Dendritic spine</location>
    </subcellularLocation>
    <text evidence="2">Remains associated with dendritic spines even after glutamate stimulation.</text>
</comment>
<gene>
    <name type="primary">CTTNBP2</name>
    <name type="synonym">CORTBP2</name>
</gene>
<feature type="chain" id="PRO_0000279879" description="Cortactin-binding protein 2">
    <location>
        <begin position="1"/>
        <end position="1663"/>
    </location>
</feature>
<feature type="repeat" description="ANK 1">
    <location>
        <begin position="709"/>
        <end position="739"/>
    </location>
</feature>
<feature type="repeat" description="ANK 2">
    <location>
        <begin position="743"/>
        <end position="772"/>
    </location>
</feature>
<feature type="repeat" description="ANK 3">
    <location>
        <begin position="776"/>
        <end position="805"/>
    </location>
</feature>
<feature type="repeat" description="ANK 4">
    <location>
        <begin position="809"/>
        <end position="838"/>
    </location>
</feature>
<feature type="repeat" description="ANK 5">
    <location>
        <begin position="842"/>
        <end position="871"/>
    </location>
</feature>
<feature type="repeat" description="ANK 6">
    <location>
        <begin position="912"/>
        <end position="942"/>
    </location>
</feature>
<feature type="region of interest" description="Disordered" evidence="5">
    <location>
        <begin position="1"/>
        <end position="23"/>
    </location>
</feature>
<feature type="region of interest" description="Disordered" evidence="5">
    <location>
        <begin position="203"/>
        <end position="222"/>
    </location>
</feature>
<feature type="region of interest" description="Disordered" evidence="5">
    <location>
        <begin position="358"/>
        <end position="440"/>
    </location>
</feature>
<feature type="region of interest" description="Disordered" evidence="5">
    <location>
        <begin position="454"/>
        <end position="479"/>
    </location>
</feature>
<feature type="region of interest" description="Disordered" evidence="5">
    <location>
        <begin position="498"/>
        <end position="616"/>
    </location>
</feature>
<feature type="region of interest" description="Disordered" evidence="5">
    <location>
        <begin position="1447"/>
        <end position="1477"/>
    </location>
</feature>
<feature type="region of interest" description="Disordered" evidence="5">
    <location>
        <begin position="1581"/>
        <end position="1602"/>
    </location>
</feature>
<feature type="region of interest" description="Disordered" evidence="5">
    <location>
        <begin position="1618"/>
        <end position="1663"/>
    </location>
</feature>
<feature type="coiled-coil region" evidence="4">
    <location>
        <begin position="119"/>
        <end position="276"/>
    </location>
</feature>
<feature type="compositionally biased region" description="Low complexity" evidence="5">
    <location>
        <begin position="386"/>
        <end position="396"/>
    </location>
</feature>
<feature type="compositionally biased region" description="Polar residues" evidence="5">
    <location>
        <begin position="411"/>
        <end position="422"/>
    </location>
</feature>
<feature type="compositionally biased region" description="Polar residues" evidence="5">
    <location>
        <begin position="583"/>
        <end position="597"/>
    </location>
</feature>
<feature type="compositionally biased region" description="Polar residues" evidence="5">
    <location>
        <begin position="1582"/>
        <end position="1599"/>
    </location>
</feature>
<feature type="compositionally biased region" description="Low complexity" evidence="5">
    <location>
        <begin position="1624"/>
        <end position="1638"/>
    </location>
</feature>
<feature type="compositionally biased region" description="Basic and acidic residues" evidence="5">
    <location>
        <begin position="1645"/>
        <end position="1663"/>
    </location>
</feature>
<feature type="modified residue" description="Asymmetric dimethylarginine" evidence="1">
    <location>
        <position position="498"/>
    </location>
</feature>
<feature type="modified residue" description="Phosphoserine" evidence="3">
    <location>
        <position position="1524"/>
    </location>
</feature>
<name>CTTB2_PAPAN</name>
<dbReference type="EMBL" id="DP000233">
    <property type="protein sequence ID" value="AAR16228.1"/>
    <property type="molecule type" value="Genomic_DNA"/>
</dbReference>
<dbReference type="RefSeq" id="NP_001162186.1">
    <property type="nucleotide sequence ID" value="NM_001168715.1"/>
</dbReference>
<dbReference type="SMR" id="A0M8S4"/>
<dbReference type="STRING" id="9555.ENSPANP00000004190"/>
<dbReference type="Ensembl" id="ENSPANT00000038638.2">
    <property type="protein sequence ID" value="ENSPANP00000031161.2"/>
    <property type="gene ID" value="ENSPANG00000007108.3"/>
</dbReference>
<dbReference type="GeneID" id="100126670"/>
<dbReference type="KEGG" id="panu:100126670"/>
<dbReference type="CTD" id="83992"/>
<dbReference type="eggNOG" id="ENOG502QWG2">
    <property type="taxonomic scope" value="Eukaryota"/>
</dbReference>
<dbReference type="GeneTree" id="ENSGT00940000158293"/>
<dbReference type="OMA" id="MCPVEAL"/>
<dbReference type="OrthoDB" id="9176at314294"/>
<dbReference type="Proteomes" id="UP000028761">
    <property type="component" value="Chromosome 4"/>
</dbReference>
<dbReference type="GO" id="GO:0005938">
    <property type="term" value="C:cell cortex"/>
    <property type="evidence" value="ECO:0007669"/>
    <property type="project" value="UniProtKB-SubCell"/>
</dbReference>
<dbReference type="GO" id="GO:0043197">
    <property type="term" value="C:dendritic spine"/>
    <property type="evidence" value="ECO:0000250"/>
    <property type="project" value="UniProtKB"/>
</dbReference>
<dbReference type="GO" id="GO:0090443">
    <property type="term" value="C:FAR/SIN/STRIPAK complex"/>
    <property type="evidence" value="ECO:0000250"/>
    <property type="project" value="UniProtKB"/>
</dbReference>
<dbReference type="GO" id="GO:0098978">
    <property type="term" value="C:glutamatergic synapse"/>
    <property type="evidence" value="ECO:0007669"/>
    <property type="project" value="Ensembl"/>
</dbReference>
<dbReference type="GO" id="GO:0098871">
    <property type="term" value="C:postsynaptic actin cytoskeleton"/>
    <property type="evidence" value="ECO:0007669"/>
    <property type="project" value="Ensembl"/>
</dbReference>
<dbReference type="GO" id="GO:0051721">
    <property type="term" value="F:protein phosphatase 2A binding"/>
    <property type="evidence" value="ECO:0007669"/>
    <property type="project" value="TreeGrafter"/>
</dbReference>
<dbReference type="Gene3D" id="1.25.40.20">
    <property type="entry name" value="Ankyrin repeat-containing domain"/>
    <property type="match status" value="1"/>
</dbReference>
<dbReference type="InterPro" id="IPR002110">
    <property type="entry name" value="Ankyrin_rpt"/>
</dbReference>
<dbReference type="InterPro" id="IPR036770">
    <property type="entry name" value="Ankyrin_rpt-contain_sf"/>
</dbReference>
<dbReference type="InterPro" id="IPR050719">
    <property type="entry name" value="Cortactin-Actin_Reg"/>
</dbReference>
<dbReference type="InterPro" id="IPR019131">
    <property type="entry name" value="Cortactin-binding_p2_N"/>
</dbReference>
<dbReference type="PANTHER" id="PTHR23166:SF9">
    <property type="entry name" value="CTTNBP2 N-TERMINAL-LIKE PROTEIN"/>
    <property type="match status" value="1"/>
</dbReference>
<dbReference type="PANTHER" id="PTHR23166">
    <property type="entry name" value="FILAMIN/GPBP-INTERACTING PROTEIN"/>
    <property type="match status" value="1"/>
</dbReference>
<dbReference type="Pfam" id="PF25408">
    <property type="entry name" value="AAA_lid_NAV1"/>
    <property type="match status" value="1"/>
</dbReference>
<dbReference type="Pfam" id="PF00023">
    <property type="entry name" value="Ank"/>
    <property type="match status" value="2"/>
</dbReference>
<dbReference type="Pfam" id="PF12796">
    <property type="entry name" value="Ank_2"/>
    <property type="match status" value="1"/>
</dbReference>
<dbReference type="Pfam" id="PF09727">
    <property type="entry name" value="CortBP2"/>
    <property type="match status" value="1"/>
</dbReference>
<dbReference type="SMART" id="SM00248">
    <property type="entry name" value="ANK"/>
    <property type="match status" value="6"/>
</dbReference>
<dbReference type="SUPFAM" id="SSF48403">
    <property type="entry name" value="Ankyrin repeat"/>
    <property type="match status" value="1"/>
</dbReference>
<dbReference type="PROSITE" id="PS50297">
    <property type="entry name" value="ANK_REP_REGION"/>
    <property type="match status" value="1"/>
</dbReference>
<dbReference type="PROSITE" id="PS50088">
    <property type="entry name" value="ANK_REPEAT"/>
    <property type="match status" value="4"/>
</dbReference>
<reference key="1">
    <citation type="journal article" date="2003" name="Nature">
        <title>Comparative analyses of multi-species sequences from targeted genomic regions.</title>
        <authorList>
            <person name="Thomas J.W."/>
            <person name="Touchman J.W."/>
            <person name="Blakesley R.W."/>
            <person name="Bouffard G.G."/>
            <person name="Beckstrom-Sternberg S.M."/>
            <person name="Margulies E.H."/>
            <person name="Blanchette M."/>
            <person name="Siepel A.C."/>
            <person name="Thomas P.J."/>
            <person name="McDowell J.C."/>
            <person name="Maskeri B."/>
            <person name="Hansen N.F."/>
            <person name="Schwartz M.S."/>
            <person name="Weber R.J."/>
            <person name="Kent W.J."/>
            <person name="Karolchik D."/>
            <person name="Bruen T.C."/>
            <person name="Bevan R."/>
            <person name="Cutler D.J."/>
            <person name="Schwartz S."/>
            <person name="Elnitski L."/>
            <person name="Idol J.R."/>
            <person name="Prasad A.B."/>
            <person name="Lee-Lin S.-Q."/>
            <person name="Maduro V.V.B."/>
            <person name="Summers T.J."/>
            <person name="Portnoy M.E."/>
            <person name="Dietrich N.L."/>
            <person name="Akhter N."/>
            <person name="Ayele K."/>
            <person name="Benjamin B."/>
            <person name="Cariaga K."/>
            <person name="Brinkley C.P."/>
            <person name="Brooks S.Y."/>
            <person name="Granite S."/>
            <person name="Guan X."/>
            <person name="Gupta J."/>
            <person name="Haghighi P."/>
            <person name="Ho S.-L."/>
            <person name="Huang M.C."/>
            <person name="Karlins E."/>
            <person name="Laric P.L."/>
            <person name="Legaspi R."/>
            <person name="Lim M.J."/>
            <person name="Maduro Q.L."/>
            <person name="Masiello C.A."/>
            <person name="Mastrian S.D."/>
            <person name="McCloskey J.C."/>
            <person name="Pearson R."/>
            <person name="Stantripop S."/>
            <person name="Tiongson E.E."/>
            <person name="Tran J.T."/>
            <person name="Tsurgeon C."/>
            <person name="Vogt J.L."/>
            <person name="Walker M.A."/>
            <person name="Wetherby K.D."/>
            <person name="Wiggins L.S."/>
            <person name="Young A.C."/>
            <person name="Zhang L.-H."/>
            <person name="Osoegawa K."/>
            <person name="Zhu B."/>
            <person name="Zhao B."/>
            <person name="Shu C.L."/>
            <person name="De Jong P.J."/>
            <person name="Lawrence C.E."/>
            <person name="Smit A.F."/>
            <person name="Chakravarti A."/>
            <person name="Haussler D."/>
            <person name="Green P."/>
            <person name="Miller W."/>
            <person name="Green E.D."/>
        </authorList>
    </citation>
    <scope>NUCLEOTIDE SEQUENCE [LARGE SCALE GENOMIC DNA]</scope>
</reference>
<sequence length="1663" mass="181185">MATDGASCEPDLSRAPEDAAGAAAEAAKKEFDVDTLSKSELRMLLSVMEGELEARDLVIEALRARRKEVFIQERYGRFNLNDPFLALQRDYEAGAGDKEKKPVCTNPLSILEAVMAHCKKMQERMSAQLAAAESRQKKLEMEKLQLQALEQEHKKLAARLEEERGKNKQVVLMLVKECKQLSGKVIEEAQKLEDIMAKLEEEKKKTNELEEELSAEKRRSTEMEAQMEKQLSEFDTEREQLRAKLNREEAHTTDLKEEIDKMKKMIEQLKRGSDSKPSLSLPRKTKDRRLVSISVGTEGTVTRSVACQTDLVTESADHVKKLPLTMPVKPSTGSPLVSANAKGSVCTSATMARPGIDRQASHGDLIGSSVPAFPPPSANRIEENGPSTDSTPDPTSSTPPLPSNAAPPTTQTPGIAPQNSQAPPMHSLHSPCANASLHPGLNPRIQAARFRFQGNANDPDQNGNTTQSPPSRDMSPTSRDNLVAKQLARNTVTQALSRFTSPQAGAPSRPGAPPTGDVGTHPPVGRTSLKTHGVARVDRGNPPPIPPKKPGLSQTPSPPHPQLKVIIDSSRASNTGAKVDNKTVASPPSSLPQGNRVTNEDNLPKSSSPQLPPKPSIDLTVAPAGCTVSALATSQVGAWPAATPGLNQPACSDSSLVIPTTIAFCSSINPVSASSCRPGASDSLLVTASGWSPSLTPLLMSGGPAPLAGRPTLLQQAAAQGNVTLLSMLLNEEGLDINYSCEDGHSALYSAAKNGHTDCVRLLLSAEAQINAADKNGFTPLCAAAAQGHFECVELLIAYDANINHAADGGQTPLYLACKNENKECIKLLLEAGTNRSVKTTDGWTPVHAAVDTGNVDSLKLLMYHRIPACGNSFNEEESESGVFDLDGGEESPEGIFKPVVPADLINHANREGWTAAHIAASKGFKNCLEILCRHGGLEPERRDKCNRTVHDVATDDCKHLLENLNALKIPLRISVGEIEPSNYGSDDLECENTICALNIRKQTSWDDFSKAVSQALTNHFQAISSDGWWSLEDVTCNNTTNSNIGLSATSIRSITLGNVPWSVGQSFTQSPWDFMRKNKAEHITVLLSGPQEGCLSSVTYASMIPLQMMQNYLRLVEQYHNVIFHGPEGSLQDYIVHQLALCLKHRQMAAGFSCEIVRAEVDAGFSKEQLLDLFISSACLIPVKQSPSKKKIIIILENLEKSSLSELLRDFLAPLENRSTESPCTFQKGNGMSECYYFHENCFLMGTIAKACLQGSDLLVQQHFRWVQLRWDGEPMQGLLQRFLRRKVVNKFKGQAPSPCDPVCKIVDWALSVWRQLNSCLARLGTPEALLGPKYFLSCPVVPGHAQVTVKWMSKLWNGVIAPRVQEAILSRASVKRQPGFGQTTAKRHPSQGQQAVVKAALSILLNKAVLHGCPLPRAELDQHTADFKGGSFPLSIVSSYNSCNKKKGESGAWRKVNTSPRRKSGRFSLPTWNKPDLSTEGIKNKTISQLNYNRNASLSKQKSLENDLSLTLNLDQRLSLGSDDEADLVKELQSMCSSKSESDISKIADSRDDLRMFDSSGNNPVLSATINNLRMPVSQKEVSPLSSHQTTECSNSKSKTELGVSRVKSFLPVPRSKVTLCSQNTKRSSSSSNTRQIEINNNSKEENWNLHKNEHLDKHNK</sequence>
<evidence type="ECO:0000250" key="1">
    <source>
        <dbReference type="UniProtKB" id="B9EJA2"/>
    </source>
</evidence>
<evidence type="ECO:0000250" key="2">
    <source>
        <dbReference type="UniProtKB" id="Q2IBD4"/>
    </source>
</evidence>
<evidence type="ECO:0000250" key="3">
    <source>
        <dbReference type="UniProtKB" id="Q8WZ74"/>
    </source>
</evidence>
<evidence type="ECO:0000255" key="4"/>
<evidence type="ECO:0000256" key="5">
    <source>
        <dbReference type="SAM" id="MobiDB-lite"/>
    </source>
</evidence>
<keyword id="KW-0040">ANK repeat</keyword>
<keyword id="KW-0966">Cell projection</keyword>
<keyword id="KW-0175">Coiled coil</keyword>
<keyword id="KW-0963">Cytoplasm</keyword>
<keyword id="KW-0488">Methylation</keyword>
<keyword id="KW-0597">Phosphoprotein</keyword>
<keyword id="KW-1185">Reference proteome</keyword>
<keyword id="KW-0677">Repeat</keyword>
<keyword id="KW-0770">Synapse</keyword>
<accession>A0M8S4</accession>
<proteinExistence type="inferred from homology"/>
<organism>
    <name type="scientific">Papio anubis</name>
    <name type="common">Olive baboon</name>
    <dbReference type="NCBI Taxonomy" id="9555"/>
    <lineage>
        <taxon>Eukaryota</taxon>
        <taxon>Metazoa</taxon>
        <taxon>Chordata</taxon>
        <taxon>Craniata</taxon>
        <taxon>Vertebrata</taxon>
        <taxon>Euteleostomi</taxon>
        <taxon>Mammalia</taxon>
        <taxon>Eutheria</taxon>
        <taxon>Euarchontoglires</taxon>
        <taxon>Primates</taxon>
        <taxon>Haplorrhini</taxon>
        <taxon>Catarrhini</taxon>
        <taxon>Cercopithecidae</taxon>
        <taxon>Cercopithecinae</taxon>
        <taxon>Papio</taxon>
    </lineage>
</organism>
<protein>
    <recommendedName>
        <fullName>Cortactin-binding protein 2</fullName>
        <shortName>CortBP2</shortName>
    </recommendedName>
</protein>